<feature type="chain" id="PRO_0000367161" description="UPF0173 metal-dependent hydrolase AZC_2841">
    <location>
        <begin position="1"/>
        <end position="236"/>
    </location>
</feature>
<protein>
    <recommendedName>
        <fullName evidence="1">UPF0173 metal-dependent hydrolase AZC_2841</fullName>
    </recommendedName>
</protein>
<evidence type="ECO:0000255" key="1">
    <source>
        <dbReference type="HAMAP-Rule" id="MF_00457"/>
    </source>
</evidence>
<reference key="1">
    <citation type="submission" date="2007-04" db="EMBL/GenBank/DDBJ databases">
        <title>Complete genome sequence of the nitrogen-fixing bacterium Azorhizobium caulinodans ORS571.</title>
        <authorList>
            <person name="Lee K.B."/>
            <person name="Backer P.D."/>
            <person name="Aono T."/>
            <person name="Liu C.T."/>
            <person name="Suzuki S."/>
            <person name="Suzuki T."/>
            <person name="Kaneko T."/>
            <person name="Yamada M."/>
            <person name="Tabata S."/>
            <person name="Kupfer D.M."/>
            <person name="Najar F.Z."/>
            <person name="Wiley G.B."/>
            <person name="Roe B."/>
            <person name="Binnewies T."/>
            <person name="Ussery D."/>
            <person name="Vereecke D."/>
            <person name="Gevers D."/>
            <person name="Holsters M."/>
            <person name="Oyaizu H."/>
        </authorList>
    </citation>
    <scope>NUCLEOTIDE SEQUENCE [LARGE SCALE GENOMIC DNA]</scope>
    <source>
        <strain>ATCC 43989 / DSM 5975 / JCM 20966 / LMG 6465 / NBRC 14845 / NCIMB 13405 / ORS 571</strain>
    </source>
</reference>
<accession>A8I9W7</accession>
<name>Y2841_AZOC5</name>
<proteinExistence type="inferred from homology"/>
<dbReference type="EMBL" id="AP009384">
    <property type="protein sequence ID" value="BAF88839.1"/>
    <property type="molecule type" value="Genomic_DNA"/>
</dbReference>
<dbReference type="RefSeq" id="WP_012171365.1">
    <property type="nucleotide sequence ID" value="NC_009937.1"/>
</dbReference>
<dbReference type="SMR" id="A8I9W7"/>
<dbReference type="STRING" id="438753.AZC_2841"/>
<dbReference type="KEGG" id="azc:AZC_2841"/>
<dbReference type="eggNOG" id="COG2220">
    <property type="taxonomic scope" value="Bacteria"/>
</dbReference>
<dbReference type="HOGENOM" id="CLU_070010_4_0_5"/>
<dbReference type="Proteomes" id="UP000000270">
    <property type="component" value="Chromosome"/>
</dbReference>
<dbReference type="GO" id="GO:0016787">
    <property type="term" value="F:hydrolase activity"/>
    <property type="evidence" value="ECO:0007669"/>
    <property type="project" value="UniProtKB-UniRule"/>
</dbReference>
<dbReference type="Gene3D" id="3.60.15.10">
    <property type="entry name" value="Ribonuclease Z/Hydroxyacylglutathione hydrolase-like"/>
    <property type="match status" value="1"/>
</dbReference>
<dbReference type="HAMAP" id="MF_00457">
    <property type="entry name" value="UPF0173"/>
    <property type="match status" value="1"/>
</dbReference>
<dbReference type="InterPro" id="IPR001279">
    <property type="entry name" value="Metallo-B-lactamas"/>
</dbReference>
<dbReference type="InterPro" id="IPR036866">
    <property type="entry name" value="RibonucZ/Hydroxyglut_hydro"/>
</dbReference>
<dbReference type="InterPro" id="IPR022877">
    <property type="entry name" value="UPF0173"/>
</dbReference>
<dbReference type="InterPro" id="IPR050114">
    <property type="entry name" value="UPF0173_UPF0282_UlaG_hydrolase"/>
</dbReference>
<dbReference type="NCBIfam" id="NF001911">
    <property type="entry name" value="PRK00685.1"/>
    <property type="match status" value="1"/>
</dbReference>
<dbReference type="PANTHER" id="PTHR43546:SF3">
    <property type="entry name" value="UPF0173 METAL-DEPENDENT HYDROLASE MJ1163"/>
    <property type="match status" value="1"/>
</dbReference>
<dbReference type="PANTHER" id="PTHR43546">
    <property type="entry name" value="UPF0173 METAL-DEPENDENT HYDROLASE MJ1163-RELATED"/>
    <property type="match status" value="1"/>
</dbReference>
<dbReference type="Pfam" id="PF12706">
    <property type="entry name" value="Lactamase_B_2"/>
    <property type="match status" value="1"/>
</dbReference>
<dbReference type="SMART" id="SM00849">
    <property type="entry name" value="Lactamase_B"/>
    <property type="match status" value="1"/>
</dbReference>
<dbReference type="SUPFAM" id="SSF56281">
    <property type="entry name" value="Metallo-hydrolase/oxidoreductase"/>
    <property type="match status" value="1"/>
</dbReference>
<gene>
    <name type="ordered locus">AZC_2841</name>
</gene>
<keyword id="KW-0378">Hydrolase</keyword>
<keyword id="KW-1185">Reference proteome</keyword>
<comment type="similarity">
    <text evidence="1">Belongs to the UPF0173 family.</text>
</comment>
<sequence>MKITWLGHAAFRLDFAGTAVLIDPFLTHNPVFKGDVAEVSKGVSHILLTHGHSDHIGDTAGIVKAAEAEGRKVIVVANPEVCGFLSGQGLSAFEPMNTGGTVKLDGFSVTMVRADHSSGGDGSNPTYLGNPNGLIVKAAGEPTLWHLGDTDLFSDMALISEIHQPKVAIVPIGDRFTMGPETAALAVRRFISAETVVPCHYGTFPLLVPDASGFVAALQGHSAKVVVPNSGESFEV</sequence>
<organism>
    <name type="scientific">Azorhizobium caulinodans (strain ATCC 43989 / DSM 5975 / JCM 20966 / LMG 6465 / NBRC 14845 / NCIMB 13405 / ORS 571)</name>
    <dbReference type="NCBI Taxonomy" id="438753"/>
    <lineage>
        <taxon>Bacteria</taxon>
        <taxon>Pseudomonadati</taxon>
        <taxon>Pseudomonadota</taxon>
        <taxon>Alphaproteobacteria</taxon>
        <taxon>Hyphomicrobiales</taxon>
        <taxon>Xanthobacteraceae</taxon>
        <taxon>Azorhizobium</taxon>
    </lineage>
</organism>